<accession>Q8Z8P7</accession>
<evidence type="ECO:0000255" key="1">
    <source>
        <dbReference type="HAMAP-Rule" id="MF_00575"/>
    </source>
</evidence>
<dbReference type="EC" id="3.6.1.54" evidence="1"/>
<dbReference type="EMBL" id="AL513382">
    <property type="protein sequence ID" value="CAD05019.1"/>
    <property type="molecule type" value="Genomic_DNA"/>
</dbReference>
<dbReference type="EMBL" id="AE014613">
    <property type="protein sequence ID" value="AAO69920.1"/>
    <property type="molecule type" value="Genomic_DNA"/>
</dbReference>
<dbReference type="RefSeq" id="NP_455127.1">
    <property type="nucleotide sequence ID" value="NC_003198.1"/>
</dbReference>
<dbReference type="RefSeq" id="WP_000212291.1">
    <property type="nucleotide sequence ID" value="NZ_WSUR01000008.1"/>
</dbReference>
<dbReference type="SMR" id="Q8Z8P7"/>
<dbReference type="STRING" id="220341.gene:17584599"/>
<dbReference type="KEGG" id="stt:t2326"/>
<dbReference type="KEGG" id="sty:STY0583"/>
<dbReference type="PATRIC" id="fig|220341.7.peg.586"/>
<dbReference type="eggNOG" id="COG2908">
    <property type="taxonomic scope" value="Bacteria"/>
</dbReference>
<dbReference type="HOGENOM" id="CLU_074586_0_0_6"/>
<dbReference type="OMA" id="GHRHLPM"/>
<dbReference type="OrthoDB" id="9783283at2"/>
<dbReference type="UniPathway" id="UPA00359">
    <property type="reaction ID" value="UER00480"/>
</dbReference>
<dbReference type="Proteomes" id="UP000000541">
    <property type="component" value="Chromosome"/>
</dbReference>
<dbReference type="Proteomes" id="UP000002670">
    <property type="component" value="Chromosome"/>
</dbReference>
<dbReference type="GO" id="GO:0005737">
    <property type="term" value="C:cytoplasm"/>
    <property type="evidence" value="ECO:0007669"/>
    <property type="project" value="InterPro"/>
</dbReference>
<dbReference type="GO" id="GO:0019897">
    <property type="term" value="C:extrinsic component of plasma membrane"/>
    <property type="evidence" value="ECO:0007669"/>
    <property type="project" value="UniProtKB-UniRule"/>
</dbReference>
<dbReference type="GO" id="GO:0030145">
    <property type="term" value="F:manganese ion binding"/>
    <property type="evidence" value="ECO:0007669"/>
    <property type="project" value="UniProtKB-UniRule"/>
</dbReference>
<dbReference type="GO" id="GO:0008758">
    <property type="term" value="F:UDP-2,3-diacylglucosamine hydrolase activity"/>
    <property type="evidence" value="ECO:0007669"/>
    <property type="project" value="UniProtKB-UniRule"/>
</dbReference>
<dbReference type="GO" id="GO:0009245">
    <property type="term" value="P:lipid A biosynthetic process"/>
    <property type="evidence" value="ECO:0007669"/>
    <property type="project" value="UniProtKB-UniRule"/>
</dbReference>
<dbReference type="CDD" id="cd07398">
    <property type="entry name" value="MPP_YbbF-LpxH"/>
    <property type="match status" value="1"/>
</dbReference>
<dbReference type="FunFam" id="3.60.21.10:FF:000012">
    <property type="entry name" value="UDP-2,3-diacylglucosamine hydrolase"/>
    <property type="match status" value="1"/>
</dbReference>
<dbReference type="Gene3D" id="3.60.21.10">
    <property type="match status" value="1"/>
</dbReference>
<dbReference type="HAMAP" id="MF_00575">
    <property type="entry name" value="LpxH"/>
    <property type="match status" value="1"/>
</dbReference>
<dbReference type="InterPro" id="IPR004843">
    <property type="entry name" value="Calcineurin-like_PHP_ApaH"/>
</dbReference>
<dbReference type="InterPro" id="IPR043461">
    <property type="entry name" value="LpxH-like"/>
</dbReference>
<dbReference type="InterPro" id="IPR029052">
    <property type="entry name" value="Metallo-depent_PP-like"/>
</dbReference>
<dbReference type="InterPro" id="IPR010138">
    <property type="entry name" value="UDP-diacylglucosamine_Hdrlase"/>
</dbReference>
<dbReference type="NCBIfam" id="TIGR01854">
    <property type="entry name" value="lipid_A_lpxH"/>
    <property type="match status" value="1"/>
</dbReference>
<dbReference type="NCBIfam" id="NF003743">
    <property type="entry name" value="PRK05340.1"/>
    <property type="match status" value="1"/>
</dbReference>
<dbReference type="PANTHER" id="PTHR34990:SF1">
    <property type="entry name" value="UDP-2,3-DIACYLGLUCOSAMINE HYDROLASE"/>
    <property type="match status" value="1"/>
</dbReference>
<dbReference type="PANTHER" id="PTHR34990">
    <property type="entry name" value="UDP-2,3-DIACYLGLUCOSAMINE HYDROLASE-RELATED"/>
    <property type="match status" value="1"/>
</dbReference>
<dbReference type="Pfam" id="PF00149">
    <property type="entry name" value="Metallophos"/>
    <property type="match status" value="1"/>
</dbReference>
<dbReference type="SUPFAM" id="SSF56300">
    <property type="entry name" value="Metallo-dependent phosphatases"/>
    <property type="match status" value="1"/>
</dbReference>
<reference key="1">
    <citation type="journal article" date="2001" name="Nature">
        <title>Complete genome sequence of a multiple drug resistant Salmonella enterica serovar Typhi CT18.</title>
        <authorList>
            <person name="Parkhill J."/>
            <person name="Dougan G."/>
            <person name="James K.D."/>
            <person name="Thomson N.R."/>
            <person name="Pickard D."/>
            <person name="Wain J."/>
            <person name="Churcher C.M."/>
            <person name="Mungall K.L."/>
            <person name="Bentley S.D."/>
            <person name="Holden M.T.G."/>
            <person name="Sebaihia M."/>
            <person name="Baker S."/>
            <person name="Basham D."/>
            <person name="Brooks K."/>
            <person name="Chillingworth T."/>
            <person name="Connerton P."/>
            <person name="Cronin A."/>
            <person name="Davis P."/>
            <person name="Davies R.M."/>
            <person name="Dowd L."/>
            <person name="White N."/>
            <person name="Farrar J."/>
            <person name="Feltwell T."/>
            <person name="Hamlin N."/>
            <person name="Haque A."/>
            <person name="Hien T.T."/>
            <person name="Holroyd S."/>
            <person name="Jagels K."/>
            <person name="Krogh A."/>
            <person name="Larsen T.S."/>
            <person name="Leather S."/>
            <person name="Moule S."/>
            <person name="O'Gaora P."/>
            <person name="Parry C."/>
            <person name="Quail M.A."/>
            <person name="Rutherford K.M."/>
            <person name="Simmonds M."/>
            <person name="Skelton J."/>
            <person name="Stevens K."/>
            <person name="Whitehead S."/>
            <person name="Barrell B.G."/>
        </authorList>
    </citation>
    <scope>NUCLEOTIDE SEQUENCE [LARGE SCALE GENOMIC DNA]</scope>
    <source>
        <strain>CT18</strain>
    </source>
</reference>
<reference key="2">
    <citation type="journal article" date="2003" name="J. Bacteriol.">
        <title>Comparative genomics of Salmonella enterica serovar Typhi strains Ty2 and CT18.</title>
        <authorList>
            <person name="Deng W."/>
            <person name="Liou S.-R."/>
            <person name="Plunkett G. III"/>
            <person name="Mayhew G.F."/>
            <person name="Rose D.J."/>
            <person name="Burland V."/>
            <person name="Kodoyianni V."/>
            <person name="Schwartz D.C."/>
            <person name="Blattner F.R."/>
        </authorList>
    </citation>
    <scope>NUCLEOTIDE SEQUENCE [LARGE SCALE GENOMIC DNA]</scope>
    <source>
        <strain>ATCC 700931 / Ty2</strain>
    </source>
</reference>
<gene>
    <name evidence="1" type="primary">lpxH</name>
    <name type="ordered locus">STY0583</name>
    <name type="ordered locus">t2326</name>
</gene>
<organism>
    <name type="scientific">Salmonella typhi</name>
    <dbReference type="NCBI Taxonomy" id="90370"/>
    <lineage>
        <taxon>Bacteria</taxon>
        <taxon>Pseudomonadati</taxon>
        <taxon>Pseudomonadota</taxon>
        <taxon>Gammaproteobacteria</taxon>
        <taxon>Enterobacterales</taxon>
        <taxon>Enterobacteriaceae</taxon>
        <taxon>Salmonella</taxon>
    </lineage>
</organism>
<sequence length="240" mass="26892">MATLFIADLHLQTEEPAIVAGFLRFLAVEARQADALYILGDLFEAWIGDDDPNPLHREMAVAIKSLVDSGVPCFFIHGNRDFLIGKRFARESGMTLLPQEKVLDLYGRNVLIMHGDTLCTDDAGYQAFRAKVHNPWVQRPFLTLPLFIRRRIAARMRAGSKAANSSKSLDIMDVNAQTVVAEMEKHRVQWLIHGHTHRPAVHELSANGQPAFRVVLGAWHHEGSMVKVTPDNVELIAFPL</sequence>
<comment type="function">
    <text evidence="1">Hydrolyzes the pyrophosphate bond of UDP-2,3-diacylglucosamine to yield 2,3-diacylglucosamine 1-phosphate (lipid X) and UMP by catalyzing the attack of water at the alpha-P atom. Involved in the biosynthesis of lipid A, a phosphorylated glycolipid that anchors the lipopolysaccharide to the outer membrane of the cell.</text>
</comment>
<comment type="catalytic activity">
    <reaction evidence="1">
        <text>UDP-2-N,3-O-bis[(3R)-3-hydroxytetradecanoyl]-alpha-D-glucosamine + H2O = 2-N,3-O-bis[(3R)-3-hydroxytetradecanoyl]-alpha-D-glucosaminyl 1-phosphate + UMP + 2 H(+)</text>
        <dbReference type="Rhea" id="RHEA:25213"/>
        <dbReference type="ChEBI" id="CHEBI:15377"/>
        <dbReference type="ChEBI" id="CHEBI:15378"/>
        <dbReference type="ChEBI" id="CHEBI:57865"/>
        <dbReference type="ChEBI" id="CHEBI:57957"/>
        <dbReference type="ChEBI" id="CHEBI:78847"/>
        <dbReference type="EC" id="3.6.1.54"/>
    </reaction>
</comment>
<comment type="cofactor">
    <cofactor evidence="1">
        <name>Mn(2+)</name>
        <dbReference type="ChEBI" id="CHEBI:29035"/>
    </cofactor>
    <text evidence="1">Binds 2 Mn(2+) ions per subunit in a binuclear metal center.</text>
</comment>
<comment type="pathway">
    <text evidence="1">Glycolipid biosynthesis; lipid IV(A) biosynthesis; lipid IV(A) from (3R)-3-hydroxytetradecanoyl-[acyl-carrier-protein] and UDP-N-acetyl-alpha-D-glucosamine: step 4/6.</text>
</comment>
<comment type="subcellular location">
    <subcellularLocation>
        <location evidence="1">Cell inner membrane</location>
        <topology evidence="1">Peripheral membrane protein</topology>
        <orientation evidence="1">Cytoplasmic side</orientation>
    </subcellularLocation>
</comment>
<comment type="similarity">
    <text evidence="1">Belongs to the LpxH family.</text>
</comment>
<proteinExistence type="inferred from homology"/>
<protein>
    <recommendedName>
        <fullName evidence="1">UDP-2,3-diacylglucosamine hydrolase</fullName>
        <ecNumber evidence="1">3.6.1.54</ecNumber>
    </recommendedName>
    <alternativeName>
        <fullName evidence="1">UDP-2,3-diacylglucosamine diphosphatase</fullName>
    </alternativeName>
</protein>
<name>LPXH_SALTI</name>
<feature type="chain" id="PRO_0000214121" description="UDP-2,3-diacylglucosamine hydrolase">
    <location>
        <begin position="1"/>
        <end position="240"/>
    </location>
</feature>
<feature type="binding site" evidence="1">
    <location>
        <position position="8"/>
    </location>
    <ligand>
        <name>Mn(2+)</name>
        <dbReference type="ChEBI" id="CHEBI:29035"/>
        <label>1</label>
    </ligand>
</feature>
<feature type="binding site" evidence="1">
    <location>
        <position position="10"/>
    </location>
    <ligand>
        <name>Mn(2+)</name>
        <dbReference type="ChEBI" id="CHEBI:29035"/>
        <label>1</label>
    </ligand>
</feature>
<feature type="binding site" evidence="1">
    <location>
        <position position="41"/>
    </location>
    <ligand>
        <name>Mn(2+)</name>
        <dbReference type="ChEBI" id="CHEBI:29035"/>
        <label>1</label>
    </ligand>
</feature>
<feature type="binding site" evidence="1">
    <location>
        <position position="41"/>
    </location>
    <ligand>
        <name>Mn(2+)</name>
        <dbReference type="ChEBI" id="CHEBI:29035"/>
        <label>2</label>
    </ligand>
</feature>
<feature type="binding site" evidence="1">
    <location>
        <begin position="79"/>
        <end position="80"/>
    </location>
    <ligand>
        <name>substrate</name>
    </ligand>
</feature>
<feature type="binding site" evidence="1">
    <location>
        <position position="79"/>
    </location>
    <ligand>
        <name>Mn(2+)</name>
        <dbReference type="ChEBI" id="CHEBI:29035"/>
        <label>2</label>
    </ligand>
</feature>
<feature type="binding site" evidence="1">
    <location>
        <position position="114"/>
    </location>
    <ligand>
        <name>Mn(2+)</name>
        <dbReference type="ChEBI" id="CHEBI:29035"/>
        <label>2</label>
    </ligand>
</feature>
<feature type="binding site" evidence="1">
    <location>
        <position position="122"/>
    </location>
    <ligand>
        <name>substrate</name>
    </ligand>
</feature>
<feature type="binding site" evidence="1">
    <location>
        <position position="160"/>
    </location>
    <ligand>
        <name>substrate</name>
    </ligand>
</feature>
<feature type="binding site" evidence="1">
    <location>
        <position position="164"/>
    </location>
    <ligand>
        <name>substrate</name>
    </ligand>
</feature>
<feature type="binding site" evidence="1">
    <location>
        <position position="167"/>
    </location>
    <ligand>
        <name>substrate</name>
    </ligand>
</feature>
<feature type="binding site" evidence="1">
    <location>
        <position position="195"/>
    </location>
    <ligand>
        <name>Mn(2+)</name>
        <dbReference type="ChEBI" id="CHEBI:29035"/>
        <label>2</label>
    </ligand>
</feature>
<feature type="binding site" evidence="1">
    <location>
        <position position="195"/>
    </location>
    <ligand>
        <name>substrate</name>
    </ligand>
</feature>
<feature type="binding site" evidence="1">
    <location>
        <position position="197"/>
    </location>
    <ligand>
        <name>Mn(2+)</name>
        <dbReference type="ChEBI" id="CHEBI:29035"/>
        <label>1</label>
    </ligand>
</feature>
<keyword id="KW-0997">Cell inner membrane</keyword>
<keyword id="KW-1003">Cell membrane</keyword>
<keyword id="KW-0378">Hydrolase</keyword>
<keyword id="KW-0441">Lipid A biosynthesis</keyword>
<keyword id="KW-0444">Lipid biosynthesis</keyword>
<keyword id="KW-0443">Lipid metabolism</keyword>
<keyword id="KW-0464">Manganese</keyword>
<keyword id="KW-0472">Membrane</keyword>
<keyword id="KW-0479">Metal-binding</keyword>